<gene>
    <name evidence="1" type="primary">rimP</name>
    <name type="ordered locus">ECP_3258</name>
</gene>
<name>RIMP_ECOL5</name>
<organism>
    <name type="scientific">Escherichia coli O6:K15:H31 (strain 536 / UPEC)</name>
    <dbReference type="NCBI Taxonomy" id="362663"/>
    <lineage>
        <taxon>Bacteria</taxon>
        <taxon>Pseudomonadati</taxon>
        <taxon>Pseudomonadota</taxon>
        <taxon>Gammaproteobacteria</taxon>
        <taxon>Enterobacterales</taxon>
        <taxon>Enterobacteriaceae</taxon>
        <taxon>Escherichia</taxon>
    </lineage>
</organism>
<sequence>MSTLEQKLTEMITAPVEALGFELVGIEFIRGRTSTLRIYIDSEDGINVDDCADVSHQVSAVLDVEDPITVAYNLEVSSPGLDRPLFTAEHYARFVGEEVTLVLRMAVQNRRKWQGVIKAVDGEMITVTVEGKDEVFALSNIQKANLVPHF</sequence>
<reference key="1">
    <citation type="journal article" date="2006" name="Mol. Microbiol.">
        <title>Role of pathogenicity island-associated integrases in the genome plasticity of uropathogenic Escherichia coli strain 536.</title>
        <authorList>
            <person name="Hochhut B."/>
            <person name="Wilde C."/>
            <person name="Balling G."/>
            <person name="Middendorf B."/>
            <person name="Dobrindt U."/>
            <person name="Brzuszkiewicz E."/>
            <person name="Gottschalk G."/>
            <person name="Carniel E."/>
            <person name="Hacker J."/>
        </authorList>
    </citation>
    <scope>NUCLEOTIDE SEQUENCE [LARGE SCALE GENOMIC DNA]</scope>
    <source>
        <strain>536 / UPEC</strain>
    </source>
</reference>
<proteinExistence type="inferred from homology"/>
<accession>Q0TCT9</accession>
<feature type="chain" id="PRO_0000384661" description="Ribosome maturation factor RimP">
    <location>
        <begin position="1"/>
        <end position="150"/>
    </location>
</feature>
<dbReference type="EMBL" id="CP000247">
    <property type="protein sequence ID" value="ABG71240.1"/>
    <property type="molecule type" value="Genomic_DNA"/>
</dbReference>
<dbReference type="RefSeq" id="WP_001300397.1">
    <property type="nucleotide sequence ID" value="NC_008253.1"/>
</dbReference>
<dbReference type="SMR" id="Q0TCT9"/>
<dbReference type="GeneID" id="93778813"/>
<dbReference type="KEGG" id="ecp:ECP_3258"/>
<dbReference type="HOGENOM" id="CLU_070525_1_1_6"/>
<dbReference type="Proteomes" id="UP000009182">
    <property type="component" value="Chromosome"/>
</dbReference>
<dbReference type="GO" id="GO:0005829">
    <property type="term" value="C:cytosol"/>
    <property type="evidence" value="ECO:0007669"/>
    <property type="project" value="TreeGrafter"/>
</dbReference>
<dbReference type="GO" id="GO:0000028">
    <property type="term" value="P:ribosomal small subunit assembly"/>
    <property type="evidence" value="ECO:0007669"/>
    <property type="project" value="TreeGrafter"/>
</dbReference>
<dbReference type="GO" id="GO:0006412">
    <property type="term" value="P:translation"/>
    <property type="evidence" value="ECO:0007669"/>
    <property type="project" value="TreeGrafter"/>
</dbReference>
<dbReference type="CDD" id="cd01734">
    <property type="entry name" value="YlxS_C"/>
    <property type="match status" value="1"/>
</dbReference>
<dbReference type="FunFam" id="2.30.30.180:FF:000001">
    <property type="entry name" value="Ribosome maturation factor RimP"/>
    <property type="match status" value="1"/>
</dbReference>
<dbReference type="FunFam" id="3.30.300.70:FF:000001">
    <property type="entry name" value="Ribosome maturation factor RimP"/>
    <property type="match status" value="1"/>
</dbReference>
<dbReference type="Gene3D" id="2.30.30.180">
    <property type="entry name" value="Ribosome maturation factor RimP, C-terminal domain"/>
    <property type="match status" value="1"/>
</dbReference>
<dbReference type="Gene3D" id="3.30.300.70">
    <property type="entry name" value="RimP-like superfamily, N-terminal"/>
    <property type="match status" value="1"/>
</dbReference>
<dbReference type="HAMAP" id="MF_01077">
    <property type="entry name" value="RimP"/>
    <property type="match status" value="1"/>
</dbReference>
<dbReference type="InterPro" id="IPR003728">
    <property type="entry name" value="Ribosome_maturation_RimP"/>
</dbReference>
<dbReference type="InterPro" id="IPR028998">
    <property type="entry name" value="RimP_C"/>
</dbReference>
<dbReference type="InterPro" id="IPR036847">
    <property type="entry name" value="RimP_C_sf"/>
</dbReference>
<dbReference type="InterPro" id="IPR028989">
    <property type="entry name" value="RimP_N"/>
</dbReference>
<dbReference type="InterPro" id="IPR035956">
    <property type="entry name" value="RimP_N_sf"/>
</dbReference>
<dbReference type="NCBIfam" id="NF000927">
    <property type="entry name" value="PRK00092.1-1"/>
    <property type="match status" value="1"/>
</dbReference>
<dbReference type="PANTHER" id="PTHR33867">
    <property type="entry name" value="RIBOSOME MATURATION FACTOR RIMP"/>
    <property type="match status" value="1"/>
</dbReference>
<dbReference type="PANTHER" id="PTHR33867:SF1">
    <property type="entry name" value="RIBOSOME MATURATION FACTOR RIMP"/>
    <property type="match status" value="1"/>
</dbReference>
<dbReference type="Pfam" id="PF17384">
    <property type="entry name" value="DUF150_C"/>
    <property type="match status" value="1"/>
</dbReference>
<dbReference type="Pfam" id="PF02576">
    <property type="entry name" value="RimP_N"/>
    <property type="match status" value="1"/>
</dbReference>
<dbReference type="SUPFAM" id="SSF74942">
    <property type="entry name" value="YhbC-like, C-terminal domain"/>
    <property type="match status" value="1"/>
</dbReference>
<dbReference type="SUPFAM" id="SSF75420">
    <property type="entry name" value="YhbC-like, N-terminal domain"/>
    <property type="match status" value="1"/>
</dbReference>
<evidence type="ECO:0000255" key="1">
    <source>
        <dbReference type="HAMAP-Rule" id="MF_01077"/>
    </source>
</evidence>
<protein>
    <recommendedName>
        <fullName evidence="1">Ribosome maturation factor RimP</fullName>
    </recommendedName>
</protein>
<keyword id="KW-0963">Cytoplasm</keyword>
<keyword id="KW-0690">Ribosome biogenesis</keyword>
<comment type="function">
    <text evidence="1">Required for maturation of 30S ribosomal subunits.</text>
</comment>
<comment type="subcellular location">
    <subcellularLocation>
        <location evidence="1">Cytoplasm</location>
    </subcellularLocation>
</comment>
<comment type="similarity">
    <text evidence="1">Belongs to the RimP family.</text>
</comment>